<gene>
    <name type="ordered locus">MT2052</name>
</gene>
<name>Y1996_MYCTO</name>
<evidence type="ECO:0000250" key="1">
    <source>
        <dbReference type="UniProtKB" id="P9WFD7"/>
    </source>
</evidence>
<evidence type="ECO:0000269" key="2">
    <source>
    </source>
</evidence>
<evidence type="ECO:0000305" key="3"/>
<protein>
    <recommendedName>
        <fullName>Universal stress protein MT2052</fullName>
    </recommendedName>
</protein>
<sequence length="317" mass="33910">MSAQQTNLGIVVGVDGSPCSHTAVEWAARDAQMRNVALRVVQVVPPVITAPEGWAFEYSRFQEAQKREIVEHSYLVAQAHQIVEQAHKVALEASSSGRAAQITGEVLHGQIVPTLTNISRQVAMVVLGYRGQGAVAGALLGSVSSSLVRHAHGPVAVIPEEPRPARPPHAPVVVGIDGSPTSGLAAEIAFDEASRRGVDLVALHAWSDMGPLDFPRLNWAPIEWRNLEDEQEKMLARRLSGWQDRYPDVVVHKVVVCDRPAPRLLELAQTAQLVVVGSHGRGGFPGMHLGSVSRAVVNSGQAPVIVARIPQDPAVPA</sequence>
<accession>P9WLP0</accession>
<accession>L0T8H1</accession>
<accession>P0A5F7</accession>
<accession>Q10862</accession>
<keyword id="KW-0067">ATP-binding</keyword>
<keyword id="KW-0547">Nucleotide-binding</keyword>
<keyword id="KW-1185">Reference proteome</keyword>
<comment type="induction">
    <text evidence="2">A member of the dormancy regulon. Induced in response to reduced oxygen tension (hypoxia) and low levels of nitric oxide (NO).</text>
</comment>
<comment type="similarity">
    <text evidence="3">Belongs to the universal stress protein A family.</text>
</comment>
<organism>
    <name type="scientific">Mycobacterium tuberculosis (strain CDC 1551 / Oshkosh)</name>
    <dbReference type="NCBI Taxonomy" id="83331"/>
    <lineage>
        <taxon>Bacteria</taxon>
        <taxon>Bacillati</taxon>
        <taxon>Actinomycetota</taxon>
        <taxon>Actinomycetes</taxon>
        <taxon>Mycobacteriales</taxon>
        <taxon>Mycobacteriaceae</taxon>
        <taxon>Mycobacterium</taxon>
        <taxon>Mycobacterium tuberculosis complex</taxon>
    </lineage>
</organism>
<reference key="1">
    <citation type="journal article" date="2002" name="J. Bacteriol.">
        <title>Whole-genome comparison of Mycobacterium tuberculosis clinical and laboratory strains.</title>
        <authorList>
            <person name="Fleischmann R.D."/>
            <person name="Alland D."/>
            <person name="Eisen J.A."/>
            <person name="Carpenter L."/>
            <person name="White O."/>
            <person name="Peterson J.D."/>
            <person name="DeBoy R.T."/>
            <person name="Dodson R.J."/>
            <person name="Gwinn M.L."/>
            <person name="Haft D.H."/>
            <person name="Hickey E.K."/>
            <person name="Kolonay J.F."/>
            <person name="Nelson W.C."/>
            <person name="Umayam L.A."/>
            <person name="Ermolaeva M.D."/>
            <person name="Salzberg S.L."/>
            <person name="Delcher A."/>
            <person name="Utterback T.R."/>
            <person name="Weidman J.F."/>
            <person name="Khouri H.M."/>
            <person name="Gill J."/>
            <person name="Mikula A."/>
            <person name="Bishai W."/>
            <person name="Jacobs W.R. Jr."/>
            <person name="Venter J.C."/>
            <person name="Fraser C.M."/>
        </authorList>
    </citation>
    <scope>NUCLEOTIDE SEQUENCE [LARGE SCALE GENOMIC DNA]</scope>
    <source>
        <strain>CDC 1551 / Oshkosh</strain>
    </source>
</reference>
<reference key="2">
    <citation type="journal article" date="2003" name="J. Exp. Med.">
        <title>Inhibition of respiration by nitric oxide induces a Mycobacterium tuberculosis dormancy program.</title>
        <authorList>
            <person name="Voskuil M.I."/>
            <person name="Schnappinger D."/>
            <person name="Visconti K.C."/>
            <person name="Harrell M.I."/>
            <person name="Dolganov G.M."/>
            <person name="Sherman D.R."/>
            <person name="Schoolnik G.K."/>
        </authorList>
    </citation>
    <scope>INDUCTION BY NITRIC OXIDE (NO) AND BY HYPOXIA</scope>
    <scope>DORMANCY REGULON</scope>
    <source>
        <strain>CDC 1551 / Oshkosh</strain>
    </source>
</reference>
<proteinExistence type="evidence at transcript level"/>
<dbReference type="EMBL" id="AE000516">
    <property type="protein sequence ID" value="AAK46329.1"/>
    <property type="molecule type" value="Genomic_DNA"/>
</dbReference>
<dbReference type="PIR" id="B70758">
    <property type="entry name" value="B70758"/>
</dbReference>
<dbReference type="RefSeq" id="WP_003917559.1">
    <property type="nucleotide sequence ID" value="NZ_KK341227.1"/>
</dbReference>
<dbReference type="SMR" id="P9WLP0"/>
<dbReference type="KEGG" id="mtc:MT2052"/>
<dbReference type="PATRIC" id="fig|83331.31.peg.2209"/>
<dbReference type="HOGENOM" id="CLU_049301_2_3_11"/>
<dbReference type="Proteomes" id="UP000001020">
    <property type="component" value="Chromosome"/>
</dbReference>
<dbReference type="GO" id="GO:0005524">
    <property type="term" value="F:ATP binding"/>
    <property type="evidence" value="ECO:0007669"/>
    <property type="project" value="UniProtKB-KW"/>
</dbReference>
<dbReference type="CDD" id="cd23944">
    <property type="entry name" value="USP_Rv2623_repeat1"/>
    <property type="match status" value="1"/>
</dbReference>
<dbReference type="CDD" id="cd23661">
    <property type="entry name" value="USP_Rv2623_repeat2"/>
    <property type="match status" value="1"/>
</dbReference>
<dbReference type="FunFam" id="3.40.50.620:FF:000123">
    <property type="entry name" value="Universal stress protein family"/>
    <property type="match status" value="2"/>
</dbReference>
<dbReference type="Gene3D" id="3.40.50.620">
    <property type="entry name" value="HUPs"/>
    <property type="match status" value="2"/>
</dbReference>
<dbReference type="InterPro" id="IPR014729">
    <property type="entry name" value="Rossmann-like_a/b/a_fold"/>
</dbReference>
<dbReference type="InterPro" id="IPR006015">
    <property type="entry name" value="Universal_stress_UspA"/>
</dbReference>
<dbReference type="InterPro" id="IPR006016">
    <property type="entry name" value="UspA"/>
</dbReference>
<dbReference type="PANTHER" id="PTHR46268">
    <property type="entry name" value="STRESS RESPONSE PROTEIN NHAX"/>
    <property type="match status" value="1"/>
</dbReference>
<dbReference type="PANTHER" id="PTHR46268:SF27">
    <property type="entry name" value="UNIVERSAL STRESS PROTEIN RV2623"/>
    <property type="match status" value="1"/>
</dbReference>
<dbReference type="Pfam" id="PF00582">
    <property type="entry name" value="Usp"/>
    <property type="match status" value="2"/>
</dbReference>
<dbReference type="PRINTS" id="PR01438">
    <property type="entry name" value="UNVRSLSTRESS"/>
</dbReference>
<dbReference type="SUPFAM" id="SSF52402">
    <property type="entry name" value="Adenine nucleotide alpha hydrolases-like"/>
    <property type="match status" value="2"/>
</dbReference>
<feature type="chain" id="PRO_0000427445" description="Universal stress protein MT2052">
    <location>
        <begin position="1"/>
        <end position="317"/>
    </location>
</feature>
<feature type="binding site" evidence="1">
    <location>
        <position position="13"/>
    </location>
    <ligand>
        <name>ATP</name>
        <dbReference type="ChEBI" id="CHEBI:30616"/>
        <label>1</label>
    </ligand>
</feature>
<feature type="binding site" evidence="1">
    <location>
        <begin position="128"/>
        <end position="134"/>
    </location>
    <ligand>
        <name>ATP</name>
        <dbReference type="ChEBI" id="CHEBI:30616"/>
        <label>1</label>
    </ligand>
</feature>
<feature type="binding site" evidence="1">
    <location>
        <begin position="142"/>
        <end position="143"/>
    </location>
    <ligand>
        <name>ATP</name>
        <dbReference type="ChEBI" id="CHEBI:30616"/>
        <label>1</label>
    </ligand>
</feature>
<feature type="binding site" evidence="1">
    <location>
        <position position="175"/>
    </location>
    <ligand>
        <name>ATP</name>
        <dbReference type="ChEBI" id="CHEBI:30616"/>
        <label>2</label>
    </ligand>
</feature>
<feature type="binding site" evidence="1">
    <location>
        <position position="208"/>
    </location>
    <ligand>
        <name>ATP</name>
        <dbReference type="ChEBI" id="CHEBI:30616"/>
        <label>2</label>
    </ligand>
</feature>
<feature type="binding site" evidence="1">
    <location>
        <begin position="277"/>
        <end position="283"/>
    </location>
    <ligand>
        <name>ATP</name>
        <dbReference type="ChEBI" id="CHEBI:30616"/>
        <label>2</label>
    </ligand>
</feature>
<feature type="binding site" evidence="1">
    <location>
        <begin position="291"/>
        <end position="293"/>
    </location>
    <ligand>
        <name>ATP</name>
        <dbReference type="ChEBI" id="CHEBI:30616"/>
        <label>2</label>
    </ligand>
</feature>